<feature type="chain" id="PRO_0000252808" description="ATP-dependent Clp protease proteolytic subunit 1">
    <location>
        <begin position="1"/>
        <end position="215"/>
    </location>
</feature>
<feature type="active site" description="Nucleophile" evidence="1">
    <location>
        <position position="108"/>
    </location>
</feature>
<feature type="active site" evidence="1">
    <location>
        <position position="133"/>
    </location>
</feature>
<reference key="1">
    <citation type="journal article" date="2006" name="Proc. Natl. Acad. Sci. U.S.A.">
        <title>Burkholderia xenovorans LB400 harbors a multi-replicon, 9.73-Mbp genome shaped for versatility.</title>
        <authorList>
            <person name="Chain P.S.G."/>
            <person name="Denef V.J."/>
            <person name="Konstantinidis K.T."/>
            <person name="Vergez L.M."/>
            <person name="Agullo L."/>
            <person name="Reyes V.L."/>
            <person name="Hauser L."/>
            <person name="Cordova M."/>
            <person name="Gomez L."/>
            <person name="Gonzalez M."/>
            <person name="Land M."/>
            <person name="Lao V."/>
            <person name="Larimer F."/>
            <person name="LiPuma J.J."/>
            <person name="Mahenthiralingam E."/>
            <person name="Malfatti S.A."/>
            <person name="Marx C.J."/>
            <person name="Parnell J.J."/>
            <person name="Ramette A."/>
            <person name="Richardson P."/>
            <person name="Seeger M."/>
            <person name="Smith D."/>
            <person name="Spilker T."/>
            <person name="Sul W.J."/>
            <person name="Tsoi T.V."/>
            <person name="Ulrich L.E."/>
            <person name="Zhulin I.B."/>
            <person name="Tiedje J.M."/>
        </authorList>
    </citation>
    <scope>NUCLEOTIDE SEQUENCE [LARGE SCALE GENOMIC DNA]</scope>
    <source>
        <strain>LB400</strain>
    </source>
</reference>
<evidence type="ECO:0000255" key="1">
    <source>
        <dbReference type="HAMAP-Rule" id="MF_00444"/>
    </source>
</evidence>
<name>CLPP1_PARXL</name>
<gene>
    <name evidence="1" type="primary">clpP1</name>
    <name type="ordered locus">Bxeno_A3620</name>
    <name type="ORF">Bxe_A0776</name>
</gene>
<comment type="function">
    <text evidence="1">Cleaves peptides in various proteins in a process that requires ATP hydrolysis. Has a chymotrypsin-like activity. Plays a major role in the degradation of misfolded proteins.</text>
</comment>
<comment type="catalytic activity">
    <reaction evidence="1">
        <text>Hydrolysis of proteins to small peptides in the presence of ATP and magnesium. alpha-casein is the usual test substrate. In the absence of ATP, only oligopeptides shorter than five residues are hydrolyzed (such as succinyl-Leu-Tyr-|-NHMec, and Leu-Tyr-Leu-|-Tyr-Trp, in which cleavage of the -Tyr-|-Leu- and -Tyr-|-Trp bonds also occurs).</text>
        <dbReference type="EC" id="3.4.21.92"/>
    </reaction>
</comment>
<comment type="subunit">
    <text evidence="1">Fourteen ClpP subunits assemble into 2 heptameric rings which stack back to back to give a disk-like structure with a central cavity, resembling the structure of eukaryotic proteasomes.</text>
</comment>
<comment type="subcellular location">
    <subcellularLocation>
        <location evidence="1">Cytoplasm</location>
    </subcellularLocation>
</comment>
<comment type="similarity">
    <text evidence="1">Belongs to the peptidase S14 family.</text>
</comment>
<sequence length="215" mass="23601">MHSSYPTITGLGLVPTVIEQSGRGERAYDIYSRLLRERIVFLVGPVNEQSASVIVAQLLFLESENPDKDISFYINSPGGSVYDGLAIYDTMQFIKPEVSTLCTGFAASMGTFLLTAGQRGKRYALPNARIMIHQPSGGSQGTAADVEIQAKEVLYLRERLNAMMAERTGRSIEEIARDTDRDNFMSAHAAKTYGLVDEVLETRAALGASPHLHDR</sequence>
<keyword id="KW-0963">Cytoplasm</keyword>
<keyword id="KW-0378">Hydrolase</keyword>
<keyword id="KW-0645">Protease</keyword>
<keyword id="KW-1185">Reference proteome</keyword>
<keyword id="KW-0720">Serine protease</keyword>
<protein>
    <recommendedName>
        <fullName evidence="1">ATP-dependent Clp protease proteolytic subunit 1</fullName>
        <ecNumber evidence="1">3.4.21.92</ecNumber>
    </recommendedName>
    <alternativeName>
        <fullName evidence="1">Endopeptidase Clp 1</fullName>
    </alternativeName>
</protein>
<proteinExistence type="inferred from homology"/>
<dbReference type="EC" id="3.4.21.92" evidence="1"/>
<dbReference type="EMBL" id="CP000270">
    <property type="protein sequence ID" value="ABE32158.1"/>
    <property type="molecule type" value="Genomic_DNA"/>
</dbReference>
<dbReference type="RefSeq" id="WP_011489658.1">
    <property type="nucleotide sequence ID" value="NC_007951.1"/>
</dbReference>
<dbReference type="SMR" id="Q13UT1"/>
<dbReference type="STRING" id="266265.Bxe_A0776"/>
<dbReference type="MEROPS" id="S14.001"/>
<dbReference type="KEGG" id="bxb:DR64_2943"/>
<dbReference type="KEGG" id="bxe:Bxe_A0776"/>
<dbReference type="PATRIC" id="fig|266265.5.peg.3815"/>
<dbReference type="eggNOG" id="COG0740">
    <property type="taxonomic scope" value="Bacteria"/>
</dbReference>
<dbReference type="OrthoDB" id="9802800at2"/>
<dbReference type="Proteomes" id="UP000001817">
    <property type="component" value="Chromosome 1"/>
</dbReference>
<dbReference type="GO" id="GO:0005737">
    <property type="term" value="C:cytoplasm"/>
    <property type="evidence" value="ECO:0007669"/>
    <property type="project" value="UniProtKB-SubCell"/>
</dbReference>
<dbReference type="GO" id="GO:0009368">
    <property type="term" value="C:endopeptidase Clp complex"/>
    <property type="evidence" value="ECO:0007669"/>
    <property type="project" value="TreeGrafter"/>
</dbReference>
<dbReference type="GO" id="GO:0004176">
    <property type="term" value="F:ATP-dependent peptidase activity"/>
    <property type="evidence" value="ECO:0007669"/>
    <property type="project" value="InterPro"/>
</dbReference>
<dbReference type="GO" id="GO:0051117">
    <property type="term" value="F:ATPase binding"/>
    <property type="evidence" value="ECO:0007669"/>
    <property type="project" value="TreeGrafter"/>
</dbReference>
<dbReference type="GO" id="GO:0004252">
    <property type="term" value="F:serine-type endopeptidase activity"/>
    <property type="evidence" value="ECO:0007669"/>
    <property type="project" value="UniProtKB-UniRule"/>
</dbReference>
<dbReference type="GO" id="GO:0006515">
    <property type="term" value="P:protein quality control for misfolded or incompletely synthesized proteins"/>
    <property type="evidence" value="ECO:0007669"/>
    <property type="project" value="TreeGrafter"/>
</dbReference>
<dbReference type="CDD" id="cd07017">
    <property type="entry name" value="S14_ClpP_2"/>
    <property type="match status" value="1"/>
</dbReference>
<dbReference type="FunFam" id="3.90.226.10:FF:000001">
    <property type="entry name" value="ATP-dependent Clp protease proteolytic subunit"/>
    <property type="match status" value="1"/>
</dbReference>
<dbReference type="Gene3D" id="3.90.226.10">
    <property type="entry name" value="2-enoyl-CoA Hydratase, Chain A, domain 1"/>
    <property type="match status" value="1"/>
</dbReference>
<dbReference type="HAMAP" id="MF_00444">
    <property type="entry name" value="ClpP"/>
    <property type="match status" value="1"/>
</dbReference>
<dbReference type="InterPro" id="IPR001907">
    <property type="entry name" value="ClpP"/>
</dbReference>
<dbReference type="InterPro" id="IPR029045">
    <property type="entry name" value="ClpP/crotonase-like_dom_sf"/>
</dbReference>
<dbReference type="InterPro" id="IPR023562">
    <property type="entry name" value="ClpP/TepA"/>
</dbReference>
<dbReference type="InterPro" id="IPR033135">
    <property type="entry name" value="ClpP_His_AS"/>
</dbReference>
<dbReference type="NCBIfam" id="TIGR00493">
    <property type="entry name" value="clpP"/>
    <property type="match status" value="1"/>
</dbReference>
<dbReference type="NCBIfam" id="NF001368">
    <property type="entry name" value="PRK00277.1"/>
    <property type="match status" value="1"/>
</dbReference>
<dbReference type="NCBIfam" id="NF009205">
    <property type="entry name" value="PRK12553.1"/>
    <property type="match status" value="1"/>
</dbReference>
<dbReference type="PANTHER" id="PTHR10381">
    <property type="entry name" value="ATP-DEPENDENT CLP PROTEASE PROTEOLYTIC SUBUNIT"/>
    <property type="match status" value="1"/>
</dbReference>
<dbReference type="PANTHER" id="PTHR10381:SF70">
    <property type="entry name" value="ATP-DEPENDENT CLP PROTEASE PROTEOLYTIC SUBUNIT"/>
    <property type="match status" value="1"/>
</dbReference>
<dbReference type="Pfam" id="PF00574">
    <property type="entry name" value="CLP_protease"/>
    <property type="match status" value="1"/>
</dbReference>
<dbReference type="PRINTS" id="PR00127">
    <property type="entry name" value="CLPPROTEASEP"/>
</dbReference>
<dbReference type="SUPFAM" id="SSF52096">
    <property type="entry name" value="ClpP/crotonase"/>
    <property type="match status" value="1"/>
</dbReference>
<dbReference type="PROSITE" id="PS00382">
    <property type="entry name" value="CLP_PROTEASE_HIS"/>
    <property type="match status" value="1"/>
</dbReference>
<accession>Q13UT1</accession>
<organism>
    <name type="scientific">Paraburkholderia xenovorans (strain LB400)</name>
    <dbReference type="NCBI Taxonomy" id="266265"/>
    <lineage>
        <taxon>Bacteria</taxon>
        <taxon>Pseudomonadati</taxon>
        <taxon>Pseudomonadota</taxon>
        <taxon>Betaproteobacteria</taxon>
        <taxon>Burkholderiales</taxon>
        <taxon>Burkholderiaceae</taxon>
        <taxon>Paraburkholderia</taxon>
    </lineage>
</organism>